<reference key="1">
    <citation type="journal article" date="2004" name="Nucleic Acids Res.">
        <title>The genome sequence of Bacillus cereus ATCC 10987 reveals metabolic adaptations and a large plasmid related to Bacillus anthracis pXO1.</title>
        <authorList>
            <person name="Rasko D.A."/>
            <person name="Ravel J."/>
            <person name="Oekstad O.A."/>
            <person name="Helgason E."/>
            <person name="Cer R.Z."/>
            <person name="Jiang L."/>
            <person name="Shores K.A."/>
            <person name="Fouts D.E."/>
            <person name="Tourasse N.J."/>
            <person name="Angiuoli S.V."/>
            <person name="Kolonay J.F."/>
            <person name="Nelson W.C."/>
            <person name="Kolstoe A.-B."/>
            <person name="Fraser C.M."/>
            <person name="Read T.D."/>
        </authorList>
    </citation>
    <scope>NUCLEOTIDE SEQUENCE [LARGE SCALE GENOMIC DNA]</scope>
    <source>
        <strain>ATCC 10987 / NRS 248</strain>
    </source>
</reference>
<sequence length="235" mass="25675">MSVHIEAKQGEIAESILLPGDPLRAKYIAETFLEDVTCYNNVRGMLGFTGTYKGKRVSVQGTGMGVPSISIYVNELIQSYGVKNLIRVGTCGAIQKDVKVRDVIIAMTACTDSNMNRLTFPGFDFAPAANFDLLKKAYDAGTEKGLHVRVGNVLTADVFYRESMDMVKKLGDYGVLAVEMETTALYTLAAKYGVNALSVLTVSDHIFTGEETTSEERQTTFNEMIEIALDAAIQQ</sequence>
<evidence type="ECO:0000250" key="1">
    <source>
        <dbReference type="UniProtKB" id="P50389"/>
    </source>
</evidence>
<evidence type="ECO:0000255" key="2">
    <source>
        <dbReference type="HAMAP-Rule" id="MF_01627"/>
    </source>
</evidence>
<keyword id="KW-0328">Glycosyltransferase</keyword>
<keyword id="KW-0808">Transferase</keyword>
<name>DEOD_BACC1</name>
<organism>
    <name type="scientific">Bacillus cereus (strain ATCC 10987 / NRS 248)</name>
    <dbReference type="NCBI Taxonomy" id="222523"/>
    <lineage>
        <taxon>Bacteria</taxon>
        <taxon>Bacillati</taxon>
        <taxon>Bacillota</taxon>
        <taxon>Bacilli</taxon>
        <taxon>Bacillales</taxon>
        <taxon>Bacillaceae</taxon>
        <taxon>Bacillus</taxon>
        <taxon>Bacillus cereus group</taxon>
    </lineage>
</organism>
<comment type="function">
    <text evidence="2">Catalyzes the reversible phosphorolytic breakdown of the N-glycosidic bond in the beta-(deoxy)ribonucleoside molecules, with the formation of the corresponding free purine bases and pentose-1-phosphate.</text>
</comment>
<comment type="catalytic activity">
    <reaction evidence="2">
        <text>a purine D-ribonucleoside + phosphate = a purine nucleobase + alpha-D-ribose 1-phosphate</text>
        <dbReference type="Rhea" id="RHEA:19805"/>
        <dbReference type="ChEBI" id="CHEBI:26386"/>
        <dbReference type="ChEBI" id="CHEBI:43474"/>
        <dbReference type="ChEBI" id="CHEBI:57720"/>
        <dbReference type="ChEBI" id="CHEBI:142355"/>
        <dbReference type="EC" id="2.4.2.1"/>
    </reaction>
</comment>
<comment type="catalytic activity">
    <reaction evidence="2">
        <text>a purine 2'-deoxy-D-ribonucleoside + phosphate = a purine nucleobase + 2-deoxy-alpha-D-ribose 1-phosphate</text>
        <dbReference type="Rhea" id="RHEA:36431"/>
        <dbReference type="ChEBI" id="CHEBI:26386"/>
        <dbReference type="ChEBI" id="CHEBI:43474"/>
        <dbReference type="ChEBI" id="CHEBI:57259"/>
        <dbReference type="ChEBI" id="CHEBI:142361"/>
        <dbReference type="EC" id="2.4.2.1"/>
    </reaction>
</comment>
<comment type="subunit">
    <text evidence="2">Homohexamer; trimer of homodimers.</text>
</comment>
<comment type="similarity">
    <text evidence="2">Belongs to the PNP/UDP phosphorylase family.</text>
</comment>
<feature type="chain" id="PRO_0000063116" description="Purine nucleoside phosphorylase DeoD-type">
    <location>
        <begin position="1"/>
        <end position="235"/>
    </location>
</feature>
<feature type="active site" description="Proton donor" evidence="2">
    <location>
        <position position="204"/>
    </location>
</feature>
<feature type="binding site" evidence="1">
    <location>
        <position position="4"/>
    </location>
    <ligand>
        <name>a purine D-ribonucleoside</name>
        <dbReference type="ChEBI" id="CHEBI:142355"/>
        <note>ligand shared between dimeric partners</note>
    </ligand>
</feature>
<feature type="binding site" description="in other chain" evidence="1">
    <location>
        <position position="20"/>
    </location>
    <ligand>
        <name>phosphate</name>
        <dbReference type="ChEBI" id="CHEBI:43474"/>
        <note>ligand shared between dimeric partners</note>
    </ligand>
</feature>
<feature type="binding site" description="in other chain" evidence="1">
    <location>
        <position position="24"/>
    </location>
    <ligand>
        <name>phosphate</name>
        <dbReference type="ChEBI" id="CHEBI:43474"/>
        <note>ligand shared between dimeric partners</note>
    </ligand>
</feature>
<feature type="binding site" evidence="1">
    <location>
        <position position="43"/>
    </location>
    <ligand>
        <name>phosphate</name>
        <dbReference type="ChEBI" id="CHEBI:43474"/>
        <note>ligand shared between dimeric partners</note>
    </ligand>
</feature>
<feature type="binding site" description="in other chain" evidence="1">
    <location>
        <begin position="87"/>
        <end position="90"/>
    </location>
    <ligand>
        <name>phosphate</name>
        <dbReference type="ChEBI" id="CHEBI:43474"/>
        <note>ligand shared between dimeric partners</note>
    </ligand>
</feature>
<feature type="binding site" description="in other chain" evidence="1">
    <location>
        <position position="162"/>
    </location>
    <ligand>
        <name>a purine D-ribonucleoside</name>
        <dbReference type="ChEBI" id="CHEBI:142355"/>
        <note>ligand shared between dimeric partners</note>
    </ligand>
</feature>
<feature type="binding site" description="in other chain" evidence="1">
    <location>
        <begin position="179"/>
        <end position="181"/>
    </location>
    <ligand>
        <name>a purine D-ribonucleoside</name>
        <dbReference type="ChEBI" id="CHEBI:142355"/>
        <note>ligand shared between dimeric partners</note>
    </ligand>
</feature>
<feature type="binding site" description="in other chain" evidence="1">
    <location>
        <begin position="203"/>
        <end position="204"/>
    </location>
    <ligand>
        <name>a purine D-ribonucleoside</name>
        <dbReference type="ChEBI" id="CHEBI:142355"/>
        <note>ligand shared between dimeric partners</note>
    </ligand>
</feature>
<feature type="site" description="Important for catalytic activity" evidence="2">
    <location>
        <position position="217"/>
    </location>
</feature>
<dbReference type="EC" id="2.4.2.1" evidence="2"/>
<dbReference type="EMBL" id="AE017194">
    <property type="protein sequence ID" value="AAS40517.1"/>
    <property type="molecule type" value="Genomic_DNA"/>
</dbReference>
<dbReference type="SMR" id="Q73B32"/>
<dbReference type="KEGG" id="bca:BCE_1588"/>
<dbReference type="HOGENOM" id="CLU_068457_2_0_9"/>
<dbReference type="Proteomes" id="UP000002527">
    <property type="component" value="Chromosome"/>
</dbReference>
<dbReference type="GO" id="GO:0005829">
    <property type="term" value="C:cytosol"/>
    <property type="evidence" value="ECO:0007669"/>
    <property type="project" value="TreeGrafter"/>
</dbReference>
<dbReference type="GO" id="GO:0004731">
    <property type="term" value="F:purine-nucleoside phosphorylase activity"/>
    <property type="evidence" value="ECO:0007669"/>
    <property type="project" value="UniProtKB-UniRule"/>
</dbReference>
<dbReference type="GO" id="GO:0006152">
    <property type="term" value="P:purine nucleoside catabolic process"/>
    <property type="evidence" value="ECO:0007669"/>
    <property type="project" value="TreeGrafter"/>
</dbReference>
<dbReference type="CDD" id="cd09006">
    <property type="entry name" value="PNP_EcPNPI-like"/>
    <property type="match status" value="1"/>
</dbReference>
<dbReference type="Gene3D" id="3.40.50.1580">
    <property type="entry name" value="Nucleoside phosphorylase domain"/>
    <property type="match status" value="1"/>
</dbReference>
<dbReference type="HAMAP" id="MF_01627">
    <property type="entry name" value="Pur_nucleosid_phosp"/>
    <property type="match status" value="1"/>
</dbReference>
<dbReference type="InterPro" id="IPR004402">
    <property type="entry name" value="DeoD-type"/>
</dbReference>
<dbReference type="InterPro" id="IPR018016">
    <property type="entry name" value="Nucleoside_phosphorylase_CS"/>
</dbReference>
<dbReference type="InterPro" id="IPR000845">
    <property type="entry name" value="Nucleoside_phosphorylase_d"/>
</dbReference>
<dbReference type="InterPro" id="IPR035994">
    <property type="entry name" value="Nucleoside_phosphorylase_sf"/>
</dbReference>
<dbReference type="NCBIfam" id="TIGR00107">
    <property type="entry name" value="deoD"/>
    <property type="match status" value="1"/>
</dbReference>
<dbReference type="NCBIfam" id="NF004489">
    <property type="entry name" value="PRK05819.1"/>
    <property type="match status" value="1"/>
</dbReference>
<dbReference type="NCBIfam" id="NF009914">
    <property type="entry name" value="PRK13374.1"/>
    <property type="match status" value="1"/>
</dbReference>
<dbReference type="PANTHER" id="PTHR43691:SF11">
    <property type="entry name" value="FI09636P-RELATED"/>
    <property type="match status" value="1"/>
</dbReference>
<dbReference type="PANTHER" id="PTHR43691">
    <property type="entry name" value="URIDINE PHOSPHORYLASE"/>
    <property type="match status" value="1"/>
</dbReference>
<dbReference type="Pfam" id="PF01048">
    <property type="entry name" value="PNP_UDP_1"/>
    <property type="match status" value="1"/>
</dbReference>
<dbReference type="SUPFAM" id="SSF53167">
    <property type="entry name" value="Purine and uridine phosphorylases"/>
    <property type="match status" value="1"/>
</dbReference>
<dbReference type="PROSITE" id="PS01232">
    <property type="entry name" value="PNP_UDP_1"/>
    <property type="match status" value="1"/>
</dbReference>
<proteinExistence type="inferred from homology"/>
<accession>Q73B32</accession>
<protein>
    <recommendedName>
        <fullName evidence="2">Purine nucleoside phosphorylase DeoD-type</fullName>
        <shortName evidence="2">PNP</shortName>
        <ecNumber evidence="2">2.4.2.1</ecNumber>
    </recommendedName>
</protein>
<gene>
    <name evidence="2" type="primary">deoD</name>
    <name type="ordered locus">BCE_1588</name>
</gene>